<sequence>MLSPRKVKYRKKQRGRLSGEAQKGNEISFGEYGLVSLETYFITARQIEAARVAMTRRVKRGGKVWIRIFPDVPYTKKPAETRMGKGKGGVDHWNAPVKLGTVMFEMAGVPRELAEAAMMLASSKLPVKTTFVVRRDLR</sequence>
<keyword id="KW-1185">Reference proteome</keyword>
<keyword id="KW-0687">Ribonucleoprotein</keyword>
<keyword id="KW-0689">Ribosomal protein</keyword>
<keyword id="KW-0694">RNA-binding</keyword>
<keyword id="KW-0699">rRNA-binding</keyword>
<keyword id="KW-0820">tRNA-binding</keyword>
<feature type="chain" id="PRO_1000166339" description="Large ribosomal subunit protein uL16">
    <location>
        <begin position="1"/>
        <end position="138"/>
    </location>
</feature>
<feature type="region of interest" description="Disordered" evidence="2">
    <location>
        <begin position="1"/>
        <end position="20"/>
    </location>
</feature>
<feature type="compositionally biased region" description="Basic residues" evidence="2">
    <location>
        <begin position="1"/>
        <end position="15"/>
    </location>
</feature>
<name>RL16_BORT9</name>
<accession>A1QZS1</accession>
<reference key="1">
    <citation type="submission" date="2004-12" db="EMBL/GenBank/DDBJ databases">
        <title>The genome sequence of Borrelia hermsii and Borrelia turicatae: comparative analysis of two agents of endemic N. America relapsing fever.</title>
        <authorList>
            <person name="Porcella S.F."/>
            <person name="Raffel S.J."/>
            <person name="Schrumpf M.E."/>
            <person name="Montgomery B."/>
            <person name="Smith T."/>
            <person name="Schwan T.G."/>
        </authorList>
    </citation>
    <scope>NUCLEOTIDE SEQUENCE [LARGE SCALE GENOMIC DNA]</scope>
    <source>
        <strain>91E135</strain>
    </source>
</reference>
<proteinExistence type="inferred from homology"/>
<dbReference type="EMBL" id="CP000049">
    <property type="protein sequence ID" value="AAX17813.1"/>
    <property type="molecule type" value="Genomic_DNA"/>
</dbReference>
<dbReference type="RefSeq" id="WP_011772432.1">
    <property type="nucleotide sequence ID" value="NZ_CP073176.1"/>
</dbReference>
<dbReference type="SMR" id="A1QZS1"/>
<dbReference type="KEGG" id="btu:BT0485"/>
<dbReference type="eggNOG" id="COG0197">
    <property type="taxonomic scope" value="Bacteria"/>
</dbReference>
<dbReference type="HOGENOM" id="CLU_078858_2_1_12"/>
<dbReference type="Proteomes" id="UP000001205">
    <property type="component" value="Chromosome"/>
</dbReference>
<dbReference type="GO" id="GO:0022625">
    <property type="term" value="C:cytosolic large ribosomal subunit"/>
    <property type="evidence" value="ECO:0007669"/>
    <property type="project" value="TreeGrafter"/>
</dbReference>
<dbReference type="GO" id="GO:0019843">
    <property type="term" value="F:rRNA binding"/>
    <property type="evidence" value="ECO:0007669"/>
    <property type="project" value="UniProtKB-UniRule"/>
</dbReference>
<dbReference type="GO" id="GO:0003735">
    <property type="term" value="F:structural constituent of ribosome"/>
    <property type="evidence" value="ECO:0007669"/>
    <property type="project" value="InterPro"/>
</dbReference>
<dbReference type="GO" id="GO:0000049">
    <property type="term" value="F:tRNA binding"/>
    <property type="evidence" value="ECO:0007669"/>
    <property type="project" value="UniProtKB-KW"/>
</dbReference>
<dbReference type="GO" id="GO:0006412">
    <property type="term" value="P:translation"/>
    <property type="evidence" value="ECO:0007669"/>
    <property type="project" value="UniProtKB-UniRule"/>
</dbReference>
<dbReference type="CDD" id="cd01433">
    <property type="entry name" value="Ribosomal_L16_L10e"/>
    <property type="match status" value="1"/>
</dbReference>
<dbReference type="FunFam" id="3.90.1170.10:FF:000001">
    <property type="entry name" value="50S ribosomal protein L16"/>
    <property type="match status" value="1"/>
</dbReference>
<dbReference type="Gene3D" id="3.90.1170.10">
    <property type="entry name" value="Ribosomal protein L10e/L16"/>
    <property type="match status" value="1"/>
</dbReference>
<dbReference type="HAMAP" id="MF_01342">
    <property type="entry name" value="Ribosomal_uL16"/>
    <property type="match status" value="1"/>
</dbReference>
<dbReference type="InterPro" id="IPR047873">
    <property type="entry name" value="Ribosomal_uL16"/>
</dbReference>
<dbReference type="InterPro" id="IPR000114">
    <property type="entry name" value="Ribosomal_uL16_bact-type"/>
</dbReference>
<dbReference type="InterPro" id="IPR020798">
    <property type="entry name" value="Ribosomal_uL16_CS"/>
</dbReference>
<dbReference type="InterPro" id="IPR016180">
    <property type="entry name" value="Ribosomal_uL16_dom"/>
</dbReference>
<dbReference type="InterPro" id="IPR036920">
    <property type="entry name" value="Ribosomal_uL16_sf"/>
</dbReference>
<dbReference type="NCBIfam" id="TIGR01164">
    <property type="entry name" value="rplP_bact"/>
    <property type="match status" value="1"/>
</dbReference>
<dbReference type="PANTHER" id="PTHR12220">
    <property type="entry name" value="50S/60S RIBOSOMAL PROTEIN L16"/>
    <property type="match status" value="1"/>
</dbReference>
<dbReference type="PANTHER" id="PTHR12220:SF13">
    <property type="entry name" value="LARGE RIBOSOMAL SUBUNIT PROTEIN UL16M"/>
    <property type="match status" value="1"/>
</dbReference>
<dbReference type="Pfam" id="PF00252">
    <property type="entry name" value="Ribosomal_L16"/>
    <property type="match status" value="1"/>
</dbReference>
<dbReference type="PRINTS" id="PR00060">
    <property type="entry name" value="RIBOSOMALL16"/>
</dbReference>
<dbReference type="SUPFAM" id="SSF54686">
    <property type="entry name" value="Ribosomal protein L16p/L10e"/>
    <property type="match status" value="1"/>
</dbReference>
<dbReference type="PROSITE" id="PS00586">
    <property type="entry name" value="RIBOSOMAL_L16_1"/>
    <property type="match status" value="1"/>
</dbReference>
<dbReference type="PROSITE" id="PS00701">
    <property type="entry name" value="RIBOSOMAL_L16_2"/>
    <property type="match status" value="1"/>
</dbReference>
<gene>
    <name evidence="1" type="primary">rplP</name>
    <name type="ordered locus">BT0485</name>
</gene>
<protein>
    <recommendedName>
        <fullName evidence="1">Large ribosomal subunit protein uL16</fullName>
    </recommendedName>
    <alternativeName>
        <fullName evidence="3">50S ribosomal protein L16</fullName>
    </alternativeName>
</protein>
<comment type="function">
    <text evidence="1">Binds 23S rRNA and is also seen to make contacts with the A and possibly P site tRNAs.</text>
</comment>
<comment type="subunit">
    <text evidence="1">Part of the 50S ribosomal subunit.</text>
</comment>
<comment type="similarity">
    <text evidence="1">Belongs to the universal ribosomal protein uL16 family.</text>
</comment>
<organism>
    <name type="scientific">Borrelia turicatae (strain 91E135)</name>
    <dbReference type="NCBI Taxonomy" id="314724"/>
    <lineage>
        <taxon>Bacteria</taxon>
        <taxon>Pseudomonadati</taxon>
        <taxon>Spirochaetota</taxon>
        <taxon>Spirochaetia</taxon>
        <taxon>Spirochaetales</taxon>
        <taxon>Borreliaceae</taxon>
        <taxon>Borrelia</taxon>
    </lineage>
</organism>
<evidence type="ECO:0000255" key="1">
    <source>
        <dbReference type="HAMAP-Rule" id="MF_01342"/>
    </source>
</evidence>
<evidence type="ECO:0000256" key="2">
    <source>
        <dbReference type="SAM" id="MobiDB-lite"/>
    </source>
</evidence>
<evidence type="ECO:0000305" key="3"/>